<reference key="1">
    <citation type="submission" date="2004-11" db="EMBL/GenBank/DDBJ databases">
        <authorList>
            <consortium name="The German cDNA consortium"/>
        </authorList>
    </citation>
    <scope>NUCLEOTIDE SEQUENCE [LARGE SCALE MRNA]</scope>
    <source>
        <tissue>Heart</tissue>
    </source>
</reference>
<accession>Q5RCZ2</accession>
<proteinExistence type="evidence at transcript level"/>
<gene>
    <name type="primary">CYB561</name>
</gene>
<protein>
    <recommendedName>
        <fullName evidence="6">Transmembrane ascorbate-dependent reductase CYB561</fullName>
        <ecNumber evidence="1">7.2.1.-</ecNumber>
    </recommendedName>
    <alternativeName>
        <fullName>Cytochrome b-561</fullName>
    </alternativeName>
    <alternativeName>
        <fullName>Cytochrome b561</fullName>
    </alternativeName>
</protein>
<name>CY561_PONAB</name>
<organism>
    <name type="scientific">Pongo abelii</name>
    <name type="common">Sumatran orangutan</name>
    <name type="synonym">Pongo pygmaeus abelii</name>
    <dbReference type="NCBI Taxonomy" id="9601"/>
    <lineage>
        <taxon>Eukaryota</taxon>
        <taxon>Metazoa</taxon>
        <taxon>Chordata</taxon>
        <taxon>Craniata</taxon>
        <taxon>Vertebrata</taxon>
        <taxon>Euteleostomi</taxon>
        <taxon>Mammalia</taxon>
        <taxon>Eutheria</taxon>
        <taxon>Euarchontoglires</taxon>
        <taxon>Primates</taxon>
        <taxon>Haplorrhini</taxon>
        <taxon>Catarrhini</taxon>
        <taxon>Hominidae</taxon>
        <taxon>Pongo</taxon>
    </lineage>
</organism>
<dbReference type="EC" id="7.2.1.-" evidence="1"/>
<dbReference type="EMBL" id="CR858126">
    <property type="protein sequence ID" value="CAH90365.1"/>
    <property type="molecule type" value="mRNA"/>
</dbReference>
<dbReference type="RefSeq" id="NP_001125175.1">
    <property type="nucleotide sequence ID" value="NM_001131703.1"/>
</dbReference>
<dbReference type="RefSeq" id="XP_009250170.1">
    <property type="nucleotide sequence ID" value="XM_009251895.4"/>
</dbReference>
<dbReference type="RefSeq" id="XP_009250171.1">
    <property type="nucleotide sequence ID" value="XM_009251896.4"/>
</dbReference>
<dbReference type="RefSeq" id="XP_024089917.1">
    <property type="nucleotide sequence ID" value="XM_024234149.3"/>
</dbReference>
<dbReference type="RefSeq" id="XP_054391087.1">
    <property type="nucleotide sequence ID" value="XM_054535112.2"/>
</dbReference>
<dbReference type="RefSeq" id="XP_063573905.1">
    <property type="nucleotide sequence ID" value="XM_063717835.1"/>
</dbReference>
<dbReference type="SMR" id="Q5RCZ2"/>
<dbReference type="FunCoup" id="Q5RCZ2">
    <property type="interactions" value="506"/>
</dbReference>
<dbReference type="STRING" id="9601.ENSPPYP00000009572"/>
<dbReference type="GeneID" id="100172064"/>
<dbReference type="KEGG" id="pon:100172064"/>
<dbReference type="CTD" id="1534"/>
<dbReference type="eggNOG" id="KOG1619">
    <property type="taxonomic scope" value="Eukaryota"/>
</dbReference>
<dbReference type="HOGENOM" id="CLU_069712_1_1_1"/>
<dbReference type="InParanoid" id="Q5RCZ2"/>
<dbReference type="OrthoDB" id="907479at2759"/>
<dbReference type="TreeFam" id="TF314222"/>
<dbReference type="Proteomes" id="UP000001595">
    <property type="component" value="Chromosome 17"/>
</dbReference>
<dbReference type="GO" id="GO:0042584">
    <property type="term" value="C:chromaffin granule membrane"/>
    <property type="evidence" value="ECO:0000250"/>
    <property type="project" value="UniProtKB"/>
</dbReference>
<dbReference type="GO" id="GO:0005765">
    <property type="term" value="C:lysosomal membrane"/>
    <property type="evidence" value="ECO:0007669"/>
    <property type="project" value="TreeGrafter"/>
</dbReference>
<dbReference type="GO" id="GO:0046872">
    <property type="term" value="F:metal ion binding"/>
    <property type="evidence" value="ECO:0007669"/>
    <property type="project" value="UniProtKB-KW"/>
</dbReference>
<dbReference type="GO" id="GO:0140575">
    <property type="term" value="F:transmembrane monodehydroascorbate reductase activity"/>
    <property type="evidence" value="ECO:0000250"/>
    <property type="project" value="UniProtKB"/>
</dbReference>
<dbReference type="GO" id="GO:0140576">
    <property type="term" value="P:ascorbate homeostasis"/>
    <property type="evidence" value="ECO:0000250"/>
    <property type="project" value="UniProtKB"/>
</dbReference>
<dbReference type="CDD" id="cd08763">
    <property type="entry name" value="Cyt_b561_CYB561"/>
    <property type="match status" value="1"/>
</dbReference>
<dbReference type="FunFam" id="1.20.120.1770:FF:000001">
    <property type="entry name" value="Cytochrome b reductase 1"/>
    <property type="match status" value="1"/>
</dbReference>
<dbReference type="Gene3D" id="1.20.120.1770">
    <property type="match status" value="1"/>
</dbReference>
<dbReference type="InterPro" id="IPR043205">
    <property type="entry name" value="CYB561/CYBRD1-like"/>
</dbReference>
<dbReference type="InterPro" id="IPR006593">
    <property type="entry name" value="Cyt_b561/ferric_Rdtase_TM"/>
</dbReference>
<dbReference type="PANTHER" id="PTHR10106">
    <property type="entry name" value="CYTOCHROME B561-RELATED"/>
    <property type="match status" value="1"/>
</dbReference>
<dbReference type="PANTHER" id="PTHR10106:SF14">
    <property type="entry name" value="TRANSMEMBRANE ASCORBATE-DEPENDENT REDUCTASE CYB561"/>
    <property type="match status" value="1"/>
</dbReference>
<dbReference type="Pfam" id="PF03188">
    <property type="entry name" value="Cytochrom_B561"/>
    <property type="match status" value="1"/>
</dbReference>
<dbReference type="SMART" id="SM00665">
    <property type="entry name" value="B561"/>
    <property type="match status" value="1"/>
</dbReference>
<dbReference type="PROSITE" id="PS50939">
    <property type="entry name" value="CYTOCHROME_B561"/>
    <property type="match status" value="1"/>
</dbReference>
<sequence length="251" mass="27718">MEGGAAASTPAALPYYVAFSQLLGLTLVAMTGAWLGLYRGGIAWESDLQFNAHPLCMVIGLIFLQGDALLVYRVFRNEAKRTTKVLHGLLHIFALVIALVGLVAVFDYHRKEGYADLYSLHSWCGILVFVLYFVQWLVGFSFFLFPGASFSLRSRYRPQHIFFGATIFLLSVGTALLGLKEALLFKLRDKYSAFEPEGVLANVLGLLLACFGGAVLYILTRADWKRPSQAEEQALSMDFKTLTEGDSPGSQ</sequence>
<keyword id="KW-0007">Acetylation</keyword>
<keyword id="KW-0968">Cytoplasmic vesicle</keyword>
<keyword id="KW-0249">Electron transport</keyword>
<keyword id="KW-0349">Heme</keyword>
<keyword id="KW-0408">Iron</keyword>
<keyword id="KW-0472">Membrane</keyword>
<keyword id="KW-0479">Metal-binding</keyword>
<keyword id="KW-0597">Phosphoprotein</keyword>
<keyword id="KW-1185">Reference proteome</keyword>
<keyword id="KW-1278">Translocase</keyword>
<keyword id="KW-0812">Transmembrane</keyword>
<keyword id="KW-1133">Transmembrane helix</keyword>
<keyword id="KW-0813">Transport</keyword>
<feature type="chain" id="PRO_0000151030" description="Transmembrane ascorbate-dependent reductase CYB561">
    <location>
        <begin position="1"/>
        <end position="251"/>
    </location>
</feature>
<feature type="topological domain" description="Cytoplasmic" evidence="2">
    <location>
        <begin position="1"/>
        <end position="16"/>
    </location>
</feature>
<feature type="transmembrane region" description="Helical" evidence="4">
    <location>
        <begin position="17"/>
        <end position="37"/>
    </location>
</feature>
<feature type="topological domain" description="Vesicular" evidence="2">
    <location>
        <begin position="38"/>
        <end position="51"/>
    </location>
</feature>
<feature type="transmembrane region" description="Helical" evidence="4">
    <location>
        <begin position="52"/>
        <end position="72"/>
    </location>
</feature>
<feature type="topological domain" description="Cytoplasmic" evidence="2">
    <location>
        <begin position="73"/>
        <end position="85"/>
    </location>
</feature>
<feature type="transmembrane region" description="Helical" evidence="4">
    <location>
        <begin position="86"/>
        <end position="106"/>
    </location>
</feature>
<feature type="topological domain" description="Vesicular" evidence="2">
    <location>
        <begin position="107"/>
        <end position="124"/>
    </location>
</feature>
<feature type="transmembrane region" description="Helical" evidence="4">
    <location>
        <begin position="125"/>
        <end position="145"/>
    </location>
</feature>
<feature type="topological domain" description="Cytoplasmic" evidence="2">
    <location>
        <begin position="146"/>
        <end position="158"/>
    </location>
</feature>
<feature type="transmembrane region" description="Helical" evidence="4">
    <location>
        <begin position="159"/>
        <end position="179"/>
    </location>
</feature>
<feature type="topological domain" description="Vesicular" evidence="2">
    <location>
        <begin position="180"/>
        <end position="198"/>
    </location>
</feature>
<feature type="transmembrane region" description="Helical" evidence="4">
    <location>
        <begin position="199"/>
        <end position="219"/>
    </location>
</feature>
<feature type="topological domain" description="Cytoplasmic" evidence="2">
    <location>
        <begin position="220"/>
        <end position="251"/>
    </location>
</feature>
<feature type="domain" description="Cytochrome b561" evidence="5">
    <location>
        <begin position="19"/>
        <end position="220"/>
    </location>
</feature>
<feature type="binding site" description="axial binding residue" evidence="2">
    <location>
        <position position="53"/>
    </location>
    <ligand>
        <name>heme b</name>
        <dbReference type="ChEBI" id="CHEBI:60344"/>
        <label>1</label>
    </ligand>
    <ligandPart>
        <name>Fe</name>
        <dbReference type="ChEBI" id="CHEBI:18248"/>
    </ligandPart>
</feature>
<feature type="binding site" evidence="2">
    <location>
        <position position="73"/>
    </location>
    <ligand>
        <name>heme b</name>
        <dbReference type="ChEBI" id="CHEBI:60344"/>
        <label>2</label>
    </ligand>
</feature>
<feature type="binding site" evidence="2">
    <location>
        <position position="80"/>
    </location>
    <ligand>
        <name>heme b</name>
        <dbReference type="ChEBI" id="CHEBI:60344"/>
        <label>2</label>
    </ligand>
</feature>
<feature type="binding site" evidence="2">
    <location>
        <position position="80"/>
    </location>
    <ligand>
        <name>L-ascorbate</name>
        <dbReference type="ChEBI" id="CHEBI:38290"/>
    </ligand>
</feature>
<feature type="binding site" evidence="2">
    <location>
        <position position="84"/>
    </location>
    <ligand>
        <name>L-ascorbate</name>
        <dbReference type="ChEBI" id="CHEBI:38290"/>
    </ligand>
</feature>
<feature type="binding site" description="axial binding residue" evidence="2">
    <location>
        <position position="87"/>
    </location>
    <ligand>
        <name>heme b</name>
        <dbReference type="ChEBI" id="CHEBI:60344"/>
        <label>2</label>
    </ligand>
    <ligandPart>
        <name>Fe</name>
        <dbReference type="ChEBI" id="CHEBI:18248"/>
    </ligandPart>
</feature>
<feature type="binding site" evidence="2">
    <location>
        <begin position="116"/>
        <end position="119"/>
    </location>
    <ligand>
        <name>heme b</name>
        <dbReference type="ChEBI" id="CHEBI:60344"/>
        <label>1</label>
    </ligand>
</feature>
<feature type="binding site" description="axial binding residue" evidence="2">
    <location>
        <position position="121"/>
    </location>
    <ligand>
        <name>heme b</name>
        <dbReference type="ChEBI" id="CHEBI:60344"/>
        <label>1</label>
    </ligand>
    <ligandPart>
        <name>Fe</name>
        <dbReference type="ChEBI" id="CHEBI:18248"/>
    </ligandPart>
</feature>
<feature type="binding site" evidence="2">
    <location>
        <position position="153"/>
    </location>
    <ligand>
        <name>L-ascorbate</name>
        <dbReference type="ChEBI" id="CHEBI:38290"/>
    </ligand>
</feature>
<feature type="binding site" description="axial binding residue" evidence="2">
    <location>
        <position position="160"/>
    </location>
    <ligand>
        <name>heme b</name>
        <dbReference type="ChEBI" id="CHEBI:60344"/>
        <label>2</label>
    </ligand>
    <ligandPart>
        <name>Fe</name>
        <dbReference type="ChEBI" id="CHEBI:18248"/>
    </ligandPart>
</feature>
<feature type="binding site" evidence="2">
    <location>
        <position position="181"/>
    </location>
    <ligand>
        <name>heme b</name>
        <dbReference type="ChEBI" id="CHEBI:60344"/>
        <label>1</label>
    </ligand>
</feature>
<feature type="binding site" evidence="2">
    <location>
        <position position="225"/>
    </location>
    <ligand>
        <name>heme b</name>
        <dbReference type="ChEBI" id="CHEBI:60344"/>
        <label>2</label>
    </ligand>
</feature>
<feature type="modified residue" description="N-acetylmethionine" evidence="1">
    <location>
        <position position="1"/>
    </location>
</feature>
<feature type="modified residue" description="Phosphoserine" evidence="3">
    <location>
        <position position="247"/>
    </location>
</feature>
<evidence type="ECO:0000250" key="1">
    <source>
        <dbReference type="UniProtKB" id="P10897"/>
    </source>
</evidence>
<evidence type="ECO:0000250" key="2">
    <source>
        <dbReference type="UniProtKB" id="Q53TN4"/>
    </source>
</evidence>
<evidence type="ECO:0000250" key="3">
    <source>
        <dbReference type="UniProtKB" id="Q60720"/>
    </source>
</evidence>
<evidence type="ECO:0000255" key="4"/>
<evidence type="ECO:0000255" key="5">
    <source>
        <dbReference type="PROSITE-ProRule" id="PRU00242"/>
    </source>
</evidence>
<evidence type="ECO:0000305" key="6"/>
<comment type="function">
    <text evidence="1">Transmembrane reductase that uses ascorbate as an electron donor in the cytoplasm and transfers electrons across membranes to reduce monodehydro-L-ascorbate radical in the lumen of secretory vesicles. It is therefore involved the regeneration and homeostasis within secretory vesicles of ascorbate which in turn provides reducing equivalents needed to support the activity of intravesicular enzymes.</text>
</comment>
<comment type="catalytic activity">
    <reaction evidence="1">
        <text>monodehydro-L-ascorbate radical(out) + L-ascorbate(in) = monodehydro-L-ascorbate radical(in) + L-ascorbate(out)</text>
        <dbReference type="Rhea" id="RHEA:66524"/>
        <dbReference type="ChEBI" id="CHEBI:38290"/>
        <dbReference type="ChEBI" id="CHEBI:59513"/>
    </reaction>
    <physiologicalReaction direction="left-to-right" evidence="1">
        <dbReference type="Rhea" id="RHEA:66525"/>
    </physiologicalReaction>
</comment>
<comment type="cofactor">
    <cofactor evidence="1">
        <name>heme b</name>
        <dbReference type="ChEBI" id="CHEBI:60344"/>
    </cofactor>
    <text evidence="1">Binds 2 heme b groups non-covalently.</text>
</comment>
<comment type="subcellular location">
    <subcellularLocation>
        <location evidence="1">Cytoplasmic vesicle</location>
        <location evidence="1">Secretory vesicle</location>
        <location evidence="1">Chromaffin granule membrane</location>
        <topology evidence="2">Multi-pass membrane protein</topology>
    </subcellularLocation>
    <text evidence="1">Secretory vesicle containing catecholamines and amidated peptides.</text>
</comment>